<dbReference type="EMBL" id="CP000440">
    <property type="protein sequence ID" value="ABI88123.1"/>
    <property type="molecule type" value="Genomic_DNA"/>
</dbReference>
<dbReference type="RefSeq" id="WP_006398529.1">
    <property type="nucleotide sequence ID" value="NZ_CP009798.1"/>
</dbReference>
<dbReference type="SMR" id="Q0BCK0"/>
<dbReference type="GeneID" id="98107640"/>
<dbReference type="KEGG" id="bam:Bamb_2567"/>
<dbReference type="PATRIC" id="fig|339670.21.peg.2338"/>
<dbReference type="eggNOG" id="COG2127">
    <property type="taxonomic scope" value="Bacteria"/>
</dbReference>
<dbReference type="Proteomes" id="UP000000662">
    <property type="component" value="Chromosome 1"/>
</dbReference>
<dbReference type="GO" id="GO:0030163">
    <property type="term" value="P:protein catabolic process"/>
    <property type="evidence" value="ECO:0007669"/>
    <property type="project" value="InterPro"/>
</dbReference>
<dbReference type="GO" id="GO:0006508">
    <property type="term" value="P:proteolysis"/>
    <property type="evidence" value="ECO:0007669"/>
    <property type="project" value="UniProtKB-UniRule"/>
</dbReference>
<dbReference type="FunFam" id="3.30.1390.10:FF:000002">
    <property type="entry name" value="ATP-dependent Clp protease adapter protein ClpS"/>
    <property type="match status" value="1"/>
</dbReference>
<dbReference type="Gene3D" id="3.30.1390.10">
    <property type="match status" value="1"/>
</dbReference>
<dbReference type="HAMAP" id="MF_00302">
    <property type="entry name" value="ClpS"/>
    <property type="match status" value="1"/>
</dbReference>
<dbReference type="InterPro" id="IPR022935">
    <property type="entry name" value="ClpS"/>
</dbReference>
<dbReference type="InterPro" id="IPR003769">
    <property type="entry name" value="ClpS_core"/>
</dbReference>
<dbReference type="InterPro" id="IPR014719">
    <property type="entry name" value="Ribosomal_bL12_C/ClpS-like"/>
</dbReference>
<dbReference type="NCBIfam" id="NF000672">
    <property type="entry name" value="PRK00033.1-5"/>
    <property type="match status" value="1"/>
</dbReference>
<dbReference type="PANTHER" id="PTHR33473:SF19">
    <property type="entry name" value="ATP-DEPENDENT CLP PROTEASE ADAPTER PROTEIN CLPS"/>
    <property type="match status" value="1"/>
</dbReference>
<dbReference type="PANTHER" id="PTHR33473">
    <property type="entry name" value="ATP-DEPENDENT CLP PROTEASE ADAPTER PROTEIN CLPS1, CHLOROPLASTIC"/>
    <property type="match status" value="1"/>
</dbReference>
<dbReference type="Pfam" id="PF02617">
    <property type="entry name" value="ClpS"/>
    <property type="match status" value="1"/>
</dbReference>
<dbReference type="SUPFAM" id="SSF54736">
    <property type="entry name" value="ClpS-like"/>
    <property type="match status" value="1"/>
</dbReference>
<gene>
    <name evidence="1" type="primary">clpS</name>
    <name type="ordered locus">Bamb_2567</name>
</gene>
<organism>
    <name type="scientific">Burkholderia ambifaria (strain ATCC BAA-244 / DSM 16087 / CCUG 44356 / LMG 19182 / AMMD)</name>
    <name type="common">Burkholderia cepacia (strain AMMD)</name>
    <dbReference type="NCBI Taxonomy" id="339670"/>
    <lineage>
        <taxon>Bacteria</taxon>
        <taxon>Pseudomonadati</taxon>
        <taxon>Pseudomonadota</taxon>
        <taxon>Betaproteobacteria</taxon>
        <taxon>Burkholderiales</taxon>
        <taxon>Burkholderiaceae</taxon>
        <taxon>Burkholderia</taxon>
        <taxon>Burkholderia cepacia complex</taxon>
    </lineage>
</organism>
<reference key="1">
    <citation type="submission" date="2006-08" db="EMBL/GenBank/DDBJ databases">
        <title>Complete sequence of chromosome 1 of Burkholderia cepacia AMMD.</title>
        <authorList>
            <person name="Copeland A."/>
            <person name="Lucas S."/>
            <person name="Lapidus A."/>
            <person name="Barry K."/>
            <person name="Detter J.C."/>
            <person name="Glavina del Rio T."/>
            <person name="Hammon N."/>
            <person name="Israni S."/>
            <person name="Pitluck S."/>
            <person name="Bruce D."/>
            <person name="Chain P."/>
            <person name="Malfatti S."/>
            <person name="Shin M."/>
            <person name="Vergez L."/>
            <person name="Schmutz J."/>
            <person name="Larimer F."/>
            <person name="Land M."/>
            <person name="Hauser L."/>
            <person name="Kyrpides N."/>
            <person name="Kim E."/>
            <person name="Parke J."/>
            <person name="Coenye T."/>
            <person name="Konstantinidis K."/>
            <person name="Ramette A."/>
            <person name="Tiedje J."/>
            <person name="Richardson P."/>
        </authorList>
    </citation>
    <scope>NUCLEOTIDE SEQUENCE [LARGE SCALE GENOMIC DNA]</scope>
    <source>
        <strain>ATCC BAA-244 / DSM 16087 / CCUG 44356 / LMG 19182 / AMMD</strain>
    </source>
</reference>
<evidence type="ECO:0000255" key="1">
    <source>
        <dbReference type="HAMAP-Rule" id="MF_00302"/>
    </source>
</evidence>
<protein>
    <recommendedName>
        <fullName evidence="1">ATP-dependent Clp protease adapter protein ClpS</fullName>
    </recommendedName>
</protein>
<comment type="function">
    <text evidence="1">Involved in the modulation of the specificity of the ClpAP-mediated ATP-dependent protein degradation.</text>
</comment>
<comment type="subunit">
    <text evidence="1">Binds to the N-terminal domain of the chaperone ClpA.</text>
</comment>
<comment type="similarity">
    <text evidence="1">Belongs to the ClpS family.</text>
</comment>
<sequence>MAIIPDKQDSTVLERKQQKLKPPSMYKVVLLNDDFTPMEFVVMVVQEYFKKDRETATQIMLKVHREGRGVCGVYTRDIASTKVEQVVTHARQAGHPLQCVMEEA</sequence>
<feature type="chain" id="PRO_1000022594" description="ATP-dependent Clp protease adapter protein ClpS">
    <location>
        <begin position="1"/>
        <end position="104"/>
    </location>
</feature>
<proteinExistence type="inferred from homology"/>
<accession>Q0BCK0</accession>
<name>CLPS_BURCM</name>